<accession>Q5E6C1</accession>
<sequence>MASHKELVKNGLWDNNPALVQLLGLCPLLAVSATVTNALGLGIATILVLVGSNLIVSLVRQWIPQEVRIPVFVMIIASLVTCVQLLMNAYAYGLYLSLGIFIPLIVTNCIIIGRAESFASKNDPLPAVLDGLWMGMGMTAVLVLLGAMREILGNGTLFDGADLLLGDWATMLRIELFHVDSHFLLAMLPPGAFLGVGFLIALKNVIDKKMADRQPKEKAEIERARIS</sequence>
<organism>
    <name type="scientific">Aliivibrio fischeri (strain ATCC 700601 / ES114)</name>
    <name type="common">Vibrio fischeri</name>
    <dbReference type="NCBI Taxonomy" id="312309"/>
    <lineage>
        <taxon>Bacteria</taxon>
        <taxon>Pseudomonadati</taxon>
        <taxon>Pseudomonadota</taxon>
        <taxon>Gammaproteobacteria</taxon>
        <taxon>Vibrionales</taxon>
        <taxon>Vibrionaceae</taxon>
        <taxon>Aliivibrio</taxon>
    </lineage>
</organism>
<name>RNFE_ALIF1</name>
<proteinExistence type="inferred from homology"/>
<protein>
    <recommendedName>
        <fullName evidence="1">Ion-translocating oxidoreductase complex subunit E</fullName>
        <ecNumber evidence="1">7.-.-.-</ecNumber>
    </recommendedName>
    <alternativeName>
        <fullName evidence="1">Rnf electron transport complex subunit E</fullName>
    </alternativeName>
</protein>
<gene>
    <name evidence="1" type="primary">rnfE</name>
    <name type="ordered locus">VF_0930</name>
</gene>
<evidence type="ECO:0000255" key="1">
    <source>
        <dbReference type="HAMAP-Rule" id="MF_00478"/>
    </source>
</evidence>
<keyword id="KW-0997">Cell inner membrane</keyword>
<keyword id="KW-1003">Cell membrane</keyword>
<keyword id="KW-0249">Electron transport</keyword>
<keyword id="KW-0472">Membrane</keyword>
<keyword id="KW-1185">Reference proteome</keyword>
<keyword id="KW-1278">Translocase</keyword>
<keyword id="KW-0812">Transmembrane</keyword>
<keyword id="KW-1133">Transmembrane helix</keyword>
<keyword id="KW-0813">Transport</keyword>
<dbReference type="EC" id="7.-.-.-" evidence="1"/>
<dbReference type="EMBL" id="CP000020">
    <property type="protein sequence ID" value="AAW85425.1"/>
    <property type="molecule type" value="Genomic_DNA"/>
</dbReference>
<dbReference type="RefSeq" id="WP_011261584.1">
    <property type="nucleotide sequence ID" value="NC_006840.2"/>
</dbReference>
<dbReference type="RefSeq" id="YP_204313.1">
    <property type="nucleotide sequence ID" value="NC_006840.2"/>
</dbReference>
<dbReference type="SMR" id="Q5E6C1"/>
<dbReference type="STRING" id="312309.VF_0930"/>
<dbReference type="EnsemblBacteria" id="AAW85425">
    <property type="protein sequence ID" value="AAW85425"/>
    <property type="gene ID" value="VF_0930"/>
</dbReference>
<dbReference type="GeneID" id="54163598"/>
<dbReference type="KEGG" id="vfi:VF_0930"/>
<dbReference type="PATRIC" id="fig|312309.11.peg.928"/>
<dbReference type="eggNOG" id="COG4660">
    <property type="taxonomic scope" value="Bacteria"/>
</dbReference>
<dbReference type="HOGENOM" id="CLU_046659_1_0_6"/>
<dbReference type="OrthoDB" id="9782945at2"/>
<dbReference type="Proteomes" id="UP000000537">
    <property type="component" value="Chromosome I"/>
</dbReference>
<dbReference type="GO" id="GO:0005886">
    <property type="term" value="C:plasma membrane"/>
    <property type="evidence" value="ECO:0007669"/>
    <property type="project" value="UniProtKB-SubCell"/>
</dbReference>
<dbReference type="GO" id="GO:0022900">
    <property type="term" value="P:electron transport chain"/>
    <property type="evidence" value="ECO:0007669"/>
    <property type="project" value="UniProtKB-UniRule"/>
</dbReference>
<dbReference type="HAMAP" id="MF_00478">
    <property type="entry name" value="RsxE_RnfE"/>
    <property type="match status" value="1"/>
</dbReference>
<dbReference type="InterPro" id="IPR003667">
    <property type="entry name" value="NqrDE/RnfAE"/>
</dbReference>
<dbReference type="InterPro" id="IPR010968">
    <property type="entry name" value="RnfE"/>
</dbReference>
<dbReference type="NCBIfam" id="NF009070">
    <property type="entry name" value="PRK12405.1"/>
    <property type="match status" value="1"/>
</dbReference>
<dbReference type="NCBIfam" id="TIGR01948">
    <property type="entry name" value="rnfE"/>
    <property type="match status" value="1"/>
</dbReference>
<dbReference type="PANTHER" id="PTHR30586">
    <property type="entry name" value="ELECTRON TRANSPORT COMPLEX PROTEIN RNFE"/>
    <property type="match status" value="1"/>
</dbReference>
<dbReference type="PANTHER" id="PTHR30586:SF0">
    <property type="entry name" value="ION-TRANSLOCATING OXIDOREDUCTASE COMPLEX SUBUNIT E"/>
    <property type="match status" value="1"/>
</dbReference>
<dbReference type="Pfam" id="PF02508">
    <property type="entry name" value="Rnf-Nqr"/>
    <property type="match status" value="1"/>
</dbReference>
<dbReference type="PIRSF" id="PIRSF006102">
    <property type="entry name" value="NQR_DE"/>
    <property type="match status" value="1"/>
</dbReference>
<comment type="function">
    <text evidence="1">Part of a membrane-bound complex that couples electron transfer with translocation of ions across the membrane.</text>
</comment>
<comment type="subunit">
    <text evidence="1">The complex is composed of six subunits: RnfA, RnfB, RnfC, RnfD, RnfE and RnfG.</text>
</comment>
<comment type="subcellular location">
    <subcellularLocation>
        <location evidence="1">Cell inner membrane</location>
        <topology evidence="1">Multi-pass membrane protein</topology>
    </subcellularLocation>
</comment>
<comment type="similarity">
    <text evidence="1">Belongs to the NqrDE/RnfAE family.</text>
</comment>
<reference key="1">
    <citation type="journal article" date="2005" name="Proc. Natl. Acad. Sci. U.S.A.">
        <title>Complete genome sequence of Vibrio fischeri: a symbiotic bacterium with pathogenic congeners.</title>
        <authorList>
            <person name="Ruby E.G."/>
            <person name="Urbanowski M."/>
            <person name="Campbell J."/>
            <person name="Dunn A."/>
            <person name="Faini M."/>
            <person name="Gunsalus R."/>
            <person name="Lostroh P."/>
            <person name="Lupp C."/>
            <person name="McCann J."/>
            <person name="Millikan D."/>
            <person name="Schaefer A."/>
            <person name="Stabb E."/>
            <person name="Stevens A."/>
            <person name="Visick K."/>
            <person name="Whistler C."/>
            <person name="Greenberg E.P."/>
        </authorList>
    </citation>
    <scope>NUCLEOTIDE SEQUENCE [LARGE SCALE GENOMIC DNA]</scope>
    <source>
        <strain>ATCC 700601 / ES114</strain>
    </source>
</reference>
<feature type="chain" id="PRO_1000014114" description="Ion-translocating oxidoreductase complex subunit E">
    <location>
        <begin position="1"/>
        <end position="227"/>
    </location>
</feature>
<feature type="transmembrane region" description="Helical" evidence="1">
    <location>
        <begin position="18"/>
        <end position="38"/>
    </location>
</feature>
<feature type="transmembrane region" description="Helical" evidence="1">
    <location>
        <begin position="39"/>
        <end position="59"/>
    </location>
</feature>
<feature type="transmembrane region" description="Helical" evidence="1">
    <location>
        <begin position="69"/>
        <end position="89"/>
    </location>
</feature>
<feature type="transmembrane region" description="Helical" evidence="1">
    <location>
        <begin position="93"/>
        <end position="113"/>
    </location>
</feature>
<feature type="transmembrane region" description="Helical" evidence="1">
    <location>
        <begin position="125"/>
        <end position="145"/>
    </location>
</feature>
<feature type="transmembrane region" description="Helical" evidence="1">
    <location>
        <begin position="182"/>
        <end position="202"/>
    </location>
</feature>